<reference key="1">
    <citation type="journal article" date="2000" name="Nature">
        <title>Sequence and analysis of chromosome 5 of the plant Arabidopsis thaliana.</title>
        <authorList>
            <person name="Tabata S."/>
            <person name="Kaneko T."/>
            <person name="Nakamura Y."/>
            <person name="Kotani H."/>
            <person name="Kato T."/>
            <person name="Asamizu E."/>
            <person name="Miyajima N."/>
            <person name="Sasamoto S."/>
            <person name="Kimura T."/>
            <person name="Hosouchi T."/>
            <person name="Kawashima K."/>
            <person name="Kohara M."/>
            <person name="Matsumoto M."/>
            <person name="Matsuno A."/>
            <person name="Muraki A."/>
            <person name="Nakayama S."/>
            <person name="Nakazaki N."/>
            <person name="Naruo K."/>
            <person name="Okumura S."/>
            <person name="Shinpo S."/>
            <person name="Takeuchi C."/>
            <person name="Wada T."/>
            <person name="Watanabe A."/>
            <person name="Yamada M."/>
            <person name="Yasuda M."/>
            <person name="Sato S."/>
            <person name="de la Bastide M."/>
            <person name="Huang E."/>
            <person name="Spiegel L."/>
            <person name="Gnoj L."/>
            <person name="O'Shaughnessy A."/>
            <person name="Preston R."/>
            <person name="Habermann K."/>
            <person name="Murray J."/>
            <person name="Johnson D."/>
            <person name="Rohlfing T."/>
            <person name="Nelson J."/>
            <person name="Stoneking T."/>
            <person name="Pepin K."/>
            <person name="Spieth J."/>
            <person name="Sekhon M."/>
            <person name="Armstrong J."/>
            <person name="Becker M."/>
            <person name="Belter E."/>
            <person name="Cordum H."/>
            <person name="Cordes M."/>
            <person name="Courtney L."/>
            <person name="Courtney W."/>
            <person name="Dante M."/>
            <person name="Du H."/>
            <person name="Edwards J."/>
            <person name="Fryman J."/>
            <person name="Haakensen B."/>
            <person name="Lamar E."/>
            <person name="Latreille P."/>
            <person name="Leonard S."/>
            <person name="Meyer R."/>
            <person name="Mulvaney E."/>
            <person name="Ozersky P."/>
            <person name="Riley A."/>
            <person name="Strowmatt C."/>
            <person name="Wagner-McPherson C."/>
            <person name="Wollam A."/>
            <person name="Yoakum M."/>
            <person name="Bell M."/>
            <person name="Dedhia N."/>
            <person name="Parnell L."/>
            <person name="Shah R."/>
            <person name="Rodriguez M."/>
            <person name="Hoon See L."/>
            <person name="Vil D."/>
            <person name="Baker J."/>
            <person name="Kirchoff K."/>
            <person name="Toth K."/>
            <person name="King L."/>
            <person name="Bahret A."/>
            <person name="Miller B."/>
            <person name="Marra M.A."/>
            <person name="Martienssen R."/>
            <person name="McCombie W.R."/>
            <person name="Wilson R.K."/>
            <person name="Murphy G."/>
            <person name="Bancroft I."/>
            <person name="Volckaert G."/>
            <person name="Wambutt R."/>
            <person name="Duesterhoeft A."/>
            <person name="Stiekema W."/>
            <person name="Pohl T."/>
            <person name="Entian K.-D."/>
            <person name="Terryn N."/>
            <person name="Hartley N."/>
            <person name="Bent E."/>
            <person name="Johnson S."/>
            <person name="Langham S.-A."/>
            <person name="McCullagh B."/>
            <person name="Robben J."/>
            <person name="Grymonprez B."/>
            <person name="Zimmermann W."/>
            <person name="Ramsperger U."/>
            <person name="Wedler H."/>
            <person name="Balke K."/>
            <person name="Wedler E."/>
            <person name="Peters S."/>
            <person name="van Staveren M."/>
            <person name="Dirkse W."/>
            <person name="Mooijman P."/>
            <person name="Klein Lankhorst R."/>
            <person name="Weitzenegger T."/>
            <person name="Bothe G."/>
            <person name="Rose M."/>
            <person name="Hauf J."/>
            <person name="Berneiser S."/>
            <person name="Hempel S."/>
            <person name="Feldpausch M."/>
            <person name="Lamberth S."/>
            <person name="Villarroel R."/>
            <person name="Gielen J."/>
            <person name="Ardiles W."/>
            <person name="Bents O."/>
            <person name="Lemcke K."/>
            <person name="Kolesov G."/>
            <person name="Mayer K.F.X."/>
            <person name="Rudd S."/>
            <person name="Schoof H."/>
            <person name="Schueller C."/>
            <person name="Zaccaria P."/>
            <person name="Mewes H.-W."/>
            <person name="Bevan M."/>
            <person name="Fransz P.F."/>
        </authorList>
    </citation>
    <scope>NUCLEOTIDE SEQUENCE [LARGE SCALE GENOMIC DNA]</scope>
    <source>
        <strain>cv. Columbia</strain>
    </source>
</reference>
<reference key="2">
    <citation type="journal article" date="2017" name="Plant J.">
        <title>Araport11: a complete reannotation of the Arabidopsis thaliana reference genome.</title>
        <authorList>
            <person name="Cheng C.Y."/>
            <person name="Krishnakumar V."/>
            <person name="Chan A.P."/>
            <person name="Thibaud-Nissen F."/>
            <person name="Schobel S."/>
            <person name="Town C.D."/>
        </authorList>
    </citation>
    <scope>GENOME REANNOTATION</scope>
    <source>
        <strain>cv. Columbia</strain>
    </source>
</reference>
<reference key="3">
    <citation type="journal article" date="2009" name="DNA Res.">
        <title>Analysis of multiple occurrences of alternative splicing events in Arabidopsis thaliana using novel sequenced full-length cDNAs.</title>
        <authorList>
            <person name="Iida K."/>
            <person name="Fukami-Kobayashi K."/>
            <person name="Toyoda A."/>
            <person name="Sakaki Y."/>
            <person name="Kobayashi M."/>
            <person name="Seki M."/>
            <person name="Shinozaki K."/>
        </authorList>
    </citation>
    <scope>NUCLEOTIDE SEQUENCE [LARGE SCALE MRNA] (ISOFORM 2)</scope>
    <source>
        <strain>cv. Columbia</strain>
        <tissue>Flower</tissue>
        <tissue>Silique</tissue>
    </source>
</reference>
<reference key="4">
    <citation type="journal article" date="2003" name="Science">
        <title>Empirical analysis of transcriptional activity in the Arabidopsis genome.</title>
        <authorList>
            <person name="Yamada K."/>
            <person name="Lim J."/>
            <person name="Dale J.M."/>
            <person name="Chen H."/>
            <person name="Shinn P."/>
            <person name="Palm C.J."/>
            <person name="Southwick A.M."/>
            <person name="Wu H.C."/>
            <person name="Kim C.J."/>
            <person name="Nguyen M."/>
            <person name="Pham P.K."/>
            <person name="Cheuk R.F."/>
            <person name="Karlin-Newmann G."/>
            <person name="Liu S.X."/>
            <person name="Lam B."/>
            <person name="Sakano H."/>
            <person name="Wu T."/>
            <person name="Yu G."/>
            <person name="Miranda M."/>
            <person name="Quach H.L."/>
            <person name="Tripp M."/>
            <person name="Chang C.H."/>
            <person name="Lee J.M."/>
            <person name="Toriumi M.J."/>
            <person name="Chan M.M."/>
            <person name="Tang C.C."/>
            <person name="Onodera C.S."/>
            <person name="Deng J.M."/>
            <person name="Akiyama K."/>
            <person name="Ansari Y."/>
            <person name="Arakawa T."/>
            <person name="Banh J."/>
            <person name="Banno F."/>
            <person name="Bowser L."/>
            <person name="Brooks S.Y."/>
            <person name="Carninci P."/>
            <person name="Chao Q."/>
            <person name="Choy N."/>
            <person name="Enju A."/>
            <person name="Goldsmith A.D."/>
            <person name="Gurjal M."/>
            <person name="Hansen N.F."/>
            <person name="Hayashizaki Y."/>
            <person name="Johnson-Hopson C."/>
            <person name="Hsuan V.W."/>
            <person name="Iida K."/>
            <person name="Karnes M."/>
            <person name="Khan S."/>
            <person name="Koesema E."/>
            <person name="Ishida J."/>
            <person name="Jiang P.X."/>
            <person name="Jones T."/>
            <person name="Kawai J."/>
            <person name="Kamiya A."/>
            <person name="Meyers C."/>
            <person name="Nakajima M."/>
            <person name="Narusaka M."/>
            <person name="Seki M."/>
            <person name="Sakurai T."/>
            <person name="Satou M."/>
            <person name="Tamse R."/>
            <person name="Vaysberg M."/>
            <person name="Wallender E.K."/>
            <person name="Wong C."/>
            <person name="Yamamura Y."/>
            <person name="Yuan S."/>
            <person name="Shinozaki K."/>
            <person name="Davis R.W."/>
            <person name="Theologis A."/>
            <person name="Ecker J.R."/>
        </authorList>
    </citation>
    <scope>NUCLEOTIDE SEQUENCE [LARGE SCALE MRNA] (ISOFORM 1)</scope>
    <source>
        <strain>cv. Columbia</strain>
    </source>
</reference>
<reference key="5">
    <citation type="submission" date="2002-03" db="EMBL/GenBank/DDBJ databases">
        <title>Full-length cDNA from Arabidopsis thaliana.</title>
        <authorList>
            <person name="Brover V.V."/>
            <person name="Troukhan M.E."/>
            <person name="Alexandrov N.A."/>
            <person name="Lu Y.-P."/>
            <person name="Flavell R.B."/>
            <person name="Feldmann K.A."/>
        </authorList>
    </citation>
    <scope>NUCLEOTIDE SEQUENCE [LARGE SCALE MRNA] (ISOFORM 1)</scope>
</reference>
<reference key="6">
    <citation type="submission" date="2005-03" db="EMBL/GenBank/DDBJ databases">
        <title>Large-scale analysis of RIKEN Arabidopsis full-length (RAFL) cDNAs.</title>
        <authorList>
            <person name="Totoki Y."/>
            <person name="Seki M."/>
            <person name="Ishida J."/>
            <person name="Nakajima M."/>
            <person name="Enju A."/>
            <person name="Kamiya A."/>
            <person name="Narusaka M."/>
            <person name="Shin-i T."/>
            <person name="Nakagawa M."/>
            <person name="Sakamoto N."/>
            <person name="Oishi K."/>
            <person name="Kohara Y."/>
            <person name="Kobayashi M."/>
            <person name="Toyoda A."/>
            <person name="Sakaki Y."/>
            <person name="Sakurai T."/>
            <person name="Iida K."/>
            <person name="Akiyama K."/>
            <person name="Satou M."/>
            <person name="Toyoda T."/>
            <person name="Konagaya A."/>
            <person name="Carninci P."/>
            <person name="Kawai J."/>
            <person name="Hayashizaki Y."/>
            <person name="Shinozaki K."/>
        </authorList>
    </citation>
    <scope>NUCLEOTIDE SEQUENCE [LARGE SCALE MRNA] OF 146-369 (ISOFORM 1)</scope>
    <source>
        <strain>cv. Columbia</strain>
    </source>
</reference>
<reference key="7">
    <citation type="journal article" date="2008" name="PLoS ONE">
        <title>Transcriptional responses of Arabidopsis thaliana during wilt disease caused by the soil-borne phytopathogenic bacterium, Ralstonia solanacearum.</title>
        <authorList>
            <person name="Hu J."/>
            <person name="Barlet X."/>
            <person name="Deslandes L."/>
            <person name="Hirsch J."/>
            <person name="Feng D.X."/>
            <person name="Somssich I."/>
            <person name="Marco Y."/>
        </authorList>
    </citation>
    <scope>INDUCTION BY RALSTONIA SOLANACERUM</scope>
    <source>
        <strain>cv. Col-5</strain>
        <strain>cv. Nd-1</strain>
    </source>
</reference>
<reference key="8">
    <citation type="journal article" date="2012" name="Plant Cell Physiol.">
        <title>Analysis of two L-Galactono-1,4-lactone-responsive genes with complementary expression during the development of Arabidopsis thaliana.</title>
        <authorList>
            <person name="Gao Y."/>
            <person name="Badejo A.A."/>
            <person name="Sawa Y."/>
            <person name="Ishikawa T."/>
        </authorList>
    </citation>
    <scope>FUNCTION</scope>
    <scope>DISRUPTION PHENOTYPE</scope>
    <scope>TISSUE SPECIFICITY</scope>
    <scope>DEVELOPMENTAL STAGE</scope>
    <scope>INDUCTION BY L-GALACTONO-1,4-LACTONE</scope>
    <scope>SUBCELLULAR LOCATION</scope>
    <source>
        <strain>cv. Columbia</strain>
    </source>
</reference>
<reference key="9">
    <citation type="journal article" date="2019" name="Int. J. Mol. Sci.">
        <title>Overview of the role of cell wall DUF642 proteins in plant development.</title>
        <authorList>
            <person name="Cruz-Valderrama J.E."/>
            <person name="Gomez-Maqueo X."/>
            <person name="Salazar-Iribe A."/>
            <person name="Zuniga-Sanchez E."/>
            <person name="Hernandez-Barrera A."/>
            <person name="Quezada-Rodriguez E."/>
            <person name="Gamboa-deBuen A."/>
        </authorList>
    </citation>
    <scope>INDUCTION BY IMBIBITION</scope>
    <scope>REVIEW</scope>
</reference>
<organism>
    <name type="scientific">Arabidopsis thaliana</name>
    <name type="common">Mouse-ear cress</name>
    <dbReference type="NCBI Taxonomy" id="3702"/>
    <lineage>
        <taxon>Eukaryota</taxon>
        <taxon>Viridiplantae</taxon>
        <taxon>Streptophyta</taxon>
        <taxon>Embryophyta</taxon>
        <taxon>Tracheophyta</taxon>
        <taxon>Spermatophyta</taxon>
        <taxon>Magnoliopsida</taxon>
        <taxon>eudicotyledons</taxon>
        <taxon>Gunneridae</taxon>
        <taxon>Pentapetalae</taxon>
        <taxon>rosids</taxon>
        <taxon>malvids</taxon>
        <taxon>Brassicales</taxon>
        <taxon>Brassicaceae</taxon>
        <taxon>Camelineae</taxon>
        <taxon>Arabidopsis</taxon>
    </lineage>
</organism>
<accession>Q94F20</accession>
<accession>C0Z328</accession>
<accession>Q56XA8</accession>
<accession>Q8LEX7</accession>
<accession>Q940Q9</accession>
<proteinExistence type="evidence at transcript level"/>
<keyword id="KW-0025">Alternative splicing</keyword>
<keyword id="KW-0134">Cell wall</keyword>
<keyword id="KW-0325">Glycoprotein</keyword>
<keyword id="KW-1185">Reference proteome</keyword>
<keyword id="KW-0964">Secreted</keyword>
<keyword id="KW-0732">Signal</keyword>
<sequence>MEGVTVVSFFLLFIATAMAAKSTVSFRDGMLPNGDFELGPKPSDMKGTEILNKLAIPNWEVTGFVEYIKSGHKQGDMLLVVPAGKFAVRLGNEASIKQRLKVVKGMYYSLTFSAARTCAQDERLNISVAPDSGVIPIQTVYSSSGWDLYAWAFQAESDVAEVVIHNPGVEEDPACGPLIDGVAMRSLYPPRPTNKNILKNGGFEEGPLVLPGSTTGVLIPPFIEDDHSPLPGWMVESLKAVKYVDVEHFSVPQGRRAIELVAGKESAIAQVVRTVIGKTYVLSFAVGDANNACKGSMVVEAFAGKDTLKVPYESKGTGGFKRASIRFVAVSTRSRIMFYSTFYAMRSDDFSSLCGPVIDDVKLISVRKP</sequence>
<comment type="function">
    <text evidence="4 7">Involved in the regulation of testa rupture during seed germination (PubMed:31284602). Required during roots and rosettes development (PubMed:22323769).</text>
</comment>
<comment type="subcellular location">
    <subcellularLocation>
        <location evidence="6">Secreted</location>
        <location evidence="6">Cell wall</location>
    </subcellularLocation>
</comment>
<comment type="alternative products">
    <event type="alternative splicing"/>
    <isoform>
        <id>Q94F20-1</id>
        <name>1</name>
        <sequence type="displayed"/>
    </isoform>
    <isoform>
        <id>Q94F20-2</id>
        <name>2</name>
        <sequence type="described" ref="VSP_061627"/>
    </isoform>
</comment>
<comment type="tissue specificity">
    <text evidence="4">Expressed in roots, seedlings and leaves.</text>
</comment>
<comment type="developmental stage">
    <text evidence="3 4">Expressed in the root excluding the apex and at leaf primordia (PubMed:22323769). Accumulates in cotyledons, hypocotyls and leaf veins of young seedlings (PubMed:22323769). Negatively regulated during infection by the bacterium Ralstonia solanacerum (PubMed:18596930).</text>
</comment>
<comment type="induction">
    <text evidence="4 5">Induced by L-galactono-1,4-lactone (L-GalL), the terminal precursor for ascorbic acid (AsA) biosynthesis in the Smirnoff-Wheeler pathway (PubMed:22323769). Accumulates during seed imbibition (PubMed:31284602).</text>
</comment>
<comment type="disruption phenotype">
    <text evidence="4">Reduced roots and rosettes development.</text>
</comment>
<name>DGR2_ARATH</name>
<dbReference type="EMBL" id="AC006258">
    <property type="status" value="NOT_ANNOTATED_CDS"/>
    <property type="molecule type" value="Genomic_DNA"/>
</dbReference>
<dbReference type="EMBL" id="CP002688">
    <property type="protein sequence ID" value="AED93446.1"/>
    <property type="molecule type" value="Genomic_DNA"/>
</dbReference>
<dbReference type="EMBL" id="AK318992">
    <property type="protein sequence ID" value="BAH57107.1"/>
    <property type="molecule type" value="mRNA"/>
</dbReference>
<dbReference type="EMBL" id="AF386962">
    <property type="protein sequence ID" value="AAK62407.1"/>
    <property type="molecule type" value="mRNA"/>
</dbReference>
<dbReference type="EMBL" id="AY054178">
    <property type="protein sequence ID" value="AAL06839.1"/>
    <property type="molecule type" value="mRNA"/>
</dbReference>
<dbReference type="EMBL" id="BT008446">
    <property type="protein sequence ID" value="AAP37805.1"/>
    <property type="molecule type" value="mRNA"/>
</dbReference>
<dbReference type="EMBL" id="AY085167">
    <property type="protein sequence ID" value="AAM61720.1"/>
    <property type="molecule type" value="mRNA"/>
</dbReference>
<dbReference type="EMBL" id="AK221767">
    <property type="protein sequence ID" value="BAD93856.1"/>
    <property type="molecule type" value="mRNA"/>
</dbReference>
<dbReference type="RefSeq" id="NP_197928.1">
    <molecule id="Q94F20-1"/>
    <property type="nucleotide sequence ID" value="NM_122456.4"/>
</dbReference>
<dbReference type="FunCoup" id="Q94F20">
    <property type="interactions" value="378"/>
</dbReference>
<dbReference type="IntAct" id="Q94F20">
    <property type="interactions" value="7"/>
</dbReference>
<dbReference type="STRING" id="3702.Q94F20"/>
<dbReference type="GlyGen" id="Q94F20">
    <property type="glycosylation" value="1 site"/>
</dbReference>
<dbReference type="PaxDb" id="3702-AT5G25460.1"/>
<dbReference type="ProteomicsDB" id="185304"/>
<dbReference type="EnsemblPlants" id="AT5G25460.1">
    <molecule id="Q94F20-1"/>
    <property type="protein sequence ID" value="AT5G25460.1"/>
    <property type="gene ID" value="AT5G25460"/>
</dbReference>
<dbReference type="GeneID" id="832620"/>
<dbReference type="Gramene" id="AT5G25460.1">
    <molecule id="Q94F20-1"/>
    <property type="protein sequence ID" value="AT5G25460.1"/>
    <property type="gene ID" value="AT5G25460"/>
</dbReference>
<dbReference type="KEGG" id="ath:AT5G25460"/>
<dbReference type="Araport" id="AT5G25460"/>
<dbReference type="TAIR" id="AT5G25460">
    <property type="gene designation" value="DGR2"/>
</dbReference>
<dbReference type="eggNOG" id="ENOG502QRP6">
    <property type="taxonomic scope" value="Eukaryota"/>
</dbReference>
<dbReference type="HOGENOM" id="CLU_040251_0_0_1"/>
<dbReference type="InParanoid" id="Q94F20"/>
<dbReference type="OMA" id="TRIVFYS"/>
<dbReference type="CD-CODE" id="4299E36E">
    <property type="entry name" value="Nucleolus"/>
</dbReference>
<dbReference type="PRO" id="PR:Q94F20"/>
<dbReference type="Proteomes" id="UP000006548">
    <property type="component" value="Chromosome 5"/>
</dbReference>
<dbReference type="ExpressionAtlas" id="Q94F20">
    <property type="expression patterns" value="baseline and differential"/>
</dbReference>
<dbReference type="GO" id="GO:0005576">
    <property type="term" value="C:extracellular region"/>
    <property type="evidence" value="ECO:0007669"/>
    <property type="project" value="UniProtKB-KW"/>
</dbReference>
<dbReference type="GO" id="GO:0009505">
    <property type="term" value="C:plant-type cell wall"/>
    <property type="evidence" value="ECO:0007005"/>
    <property type="project" value="TAIR"/>
</dbReference>
<dbReference type="GO" id="GO:0009506">
    <property type="term" value="C:plasmodesma"/>
    <property type="evidence" value="ECO:0007005"/>
    <property type="project" value="TAIR"/>
</dbReference>
<dbReference type="GO" id="GO:0009536">
    <property type="term" value="C:plastid"/>
    <property type="evidence" value="ECO:0007005"/>
    <property type="project" value="TAIR"/>
</dbReference>
<dbReference type="GO" id="GO:0010015">
    <property type="term" value="P:root morphogenesis"/>
    <property type="evidence" value="ECO:0000315"/>
    <property type="project" value="TAIR"/>
</dbReference>
<dbReference type="FunFam" id="2.60.120.260:FF:000031">
    <property type="entry name" value="DUF642 family protein"/>
    <property type="match status" value="1"/>
</dbReference>
<dbReference type="Gene3D" id="2.60.120.260">
    <property type="entry name" value="Galactose-binding domain-like"/>
    <property type="match status" value="1"/>
</dbReference>
<dbReference type="InterPro" id="IPR006946">
    <property type="entry name" value="DGR2-like_dom"/>
</dbReference>
<dbReference type="InterPro" id="IPR008979">
    <property type="entry name" value="Galactose-bd-like_sf"/>
</dbReference>
<dbReference type="InterPro" id="IPR052437">
    <property type="entry name" value="Pectin_Meth_Modulator"/>
</dbReference>
<dbReference type="PANTHER" id="PTHR31265">
    <property type="entry name" value="OS02G0527500 PROTEIN-RELATED"/>
    <property type="match status" value="1"/>
</dbReference>
<dbReference type="PANTHER" id="PTHR31265:SF29">
    <property type="entry name" value="PROTEIN DUF642 L-GALACTONO-1,4-LACTONE-RESPONSIVE GENE 2"/>
    <property type="match status" value="1"/>
</dbReference>
<dbReference type="Pfam" id="PF04862">
    <property type="entry name" value="DUF642"/>
    <property type="match status" value="2"/>
</dbReference>
<dbReference type="SUPFAM" id="SSF49785">
    <property type="entry name" value="Galactose-binding domain-like"/>
    <property type="match status" value="1"/>
</dbReference>
<feature type="signal peptide" evidence="1">
    <location>
        <begin position="1"/>
        <end position="19"/>
    </location>
</feature>
<feature type="chain" id="PRO_5014312529" description="Protein DUF642 L-GALACTONO-1,4-LACTONE-RESPONSIVE GENE 2">
    <location>
        <begin position="20"/>
        <end position="369"/>
    </location>
</feature>
<feature type="glycosylation site" description="N-linked (GlcNAc...) asparagine" evidence="2">
    <location>
        <position position="125"/>
    </location>
</feature>
<feature type="splice variant" id="VSP_061627" description="In isoform 2.">
    <location>
        <begin position="1"/>
        <end position="183"/>
    </location>
</feature>
<feature type="sequence conflict" description="In Ref. 5; AAM61720." evidence="8" ref="5">
    <original>A</original>
    <variation>S</variation>
    <location>
        <position position="301"/>
    </location>
</feature>
<feature type="sequence conflict" description="In Ref. 4; AAL06839." evidence="8" ref="4">
    <original>S</original>
    <variation>L</variation>
    <location>
        <position position="331"/>
    </location>
</feature>
<feature type="sequence conflict" description="In Ref. 5; AAM61720." evidence="8" ref="5">
    <original>I</original>
    <variation>M</variation>
    <location>
        <position position="336"/>
    </location>
</feature>
<protein>
    <recommendedName>
        <fullName evidence="6">Protein DUF642 L-GALACTONO-1,4-LACTONE-RESPONSIVE GENE 2</fullName>
        <shortName evidence="6">DUF642 L-GalL-RESPONSIVE GENE 2</shortName>
    </recommendedName>
</protein>
<gene>
    <name evidence="6" type="primary">DGR2</name>
    <name evidence="9" type="ordered locus">At5g25460</name>
    <name evidence="10" type="ORF">F18G18.200</name>
</gene>
<evidence type="ECO:0000255" key="1"/>
<evidence type="ECO:0000255" key="2">
    <source>
        <dbReference type="PROSITE-ProRule" id="PRU00498"/>
    </source>
</evidence>
<evidence type="ECO:0000269" key="3">
    <source>
    </source>
</evidence>
<evidence type="ECO:0000269" key="4">
    <source>
    </source>
</evidence>
<evidence type="ECO:0000269" key="5">
    <source>
    </source>
</evidence>
<evidence type="ECO:0000303" key="6">
    <source>
    </source>
</evidence>
<evidence type="ECO:0000303" key="7">
    <source>
    </source>
</evidence>
<evidence type="ECO:0000305" key="8"/>
<evidence type="ECO:0000312" key="9">
    <source>
        <dbReference type="Araport" id="AT5G25460"/>
    </source>
</evidence>
<evidence type="ECO:0000312" key="10">
    <source>
        <dbReference type="EMBL" id="AED93446.1"/>
    </source>
</evidence>